<sequence>MIEKMQGSRMDEQRCSFPPPLKTEEDYIPYPSVHEVLGREGPFPLILLPQFGGYWIEGTNHEITSIPETEPLQSPTTKVKLECNPTARIYRKHFLGKEHFNYYSLDAALGHLVFSLKYDVIGDQEHLRLLLRTKCRTYHDVIPISCLTEFPNVVQMAKLVCEDVNVDRFYPVLYPKASRLIVTFDEHVISNNFKFGVIYQKLGQTSEEELFSTNEESPAFVEFLEFLGQKVKLQDFKGFRGGLDVTHGQTGTESVYCNFRNKEIMFHVSTKLPYTEGDAQQLQRKRHIGNDIVAVVFQDENTPFVPDMIASNFLHAYVVVQAEGGGPDGPLYKVSVTARDDVPFFGPPLPDPAVFRKGPEFQEFLLTKLINAEYACYKAEKFAKLEERTRAALLETLYEELHIHSQSMMGLGGDEDKMENGSGGGGFFESFKRVIRSRSQSMDAMGLSNKKPNTVSTSHSGSFAPNNPDLAKAAGISLIVPGKSPTRKKSGPFGSRRSSAIGIENIQEVQEKRESPPAGQKTPDSGHVSQEPKSENSSTQSSPEMPTTKNRAETAAQRAEALKDFSRSSSSASSFASVVEETEGVDGEDTGLESVSSSGTPHKRDSFIYSTWLEDSVSTTSGGSSPGPSRSPHPDAGKLGDPACPEIKIQLEASEQHMPQLGC</sequence>
<name>RPGP1_HUMAN</name>
<organism>
    <name type="scientific">Homo sapiens</name>
    <name type="common">Human</name>
    <dbReference type="NCBI Taxonomy" id="9606"/>
    <lineage>
        <taxon>Eukaryota</taxon>
        <taxon>Metazoa</taxon>
        <taxon>Chordata</taxon>
        <taxon>Craniata</taxon>
        <taxon>Vertebrata</taxon>
        <taxon>Euteleostomi</taxon>
        <taxon>Mammalia</taxon>
        <taxon>Eutheria</taxon>
        <taxon>Euarchontoglires</taxon>
        <taxon>Primates</taxon>
        <taxon>Haplorrhini</taxon>
        <taxon>Catarrhini</taxon>
        <taxon>Hominidae</taxon>
        <taxon>Homo</taxon>
    </lineage>
</organism>
<dbReference type="EMBL" id="M64788">
    <property type="protein sequence ID" value="AAA60252.1"/>
    <property type="molecule type" value="mRNA"/>
</dbReference>
<dbReference type="EMBL" id="AB007943">
    <property type="protein sequence ID" value="BAA32319.3"/>
    <property type="status" value="ALT_INIT"/>
    <property type="molecule type" value="mRNA"/>
</dbReference>
<dbReference type="EMBL" id="AL359815">
    <property type="status" value="NOT_ANNOTATED_CDS"/>
    <property type="molecule type" value="Genomic_DNA"/>
</dbReference>
<dbReference type="EMBL" id="CH471134">
    <property type="protein sequence ID" value="EAW94980.1"/>
    <property type="molecule type" value="Genomic_DNA"/>
</dbReference>
<dbReference type="EMBL" id="CH471134">
    <property type="protein sequence ID" value="EAW94981.1"/>
    <property type="molecule type" value="Genomic_DNA"/>
</dbReference>
<dbReference type="EMBL" id="AB003930">
    <property type="protein sequence ID" value="BAA83674.1"/>
    <property type="molecule type" value="mRNA"/>
</dbReference>
<dbReference type="EMBL" id="BC054490">
    <property type="protein sequence ID" value="AAH54490.1"/>
    <property type="status" value="ALT_INIT"/>
    <property type="molecule type" value="mRNA"/>
</dbReference>
<dbReference type="CCDS" id="CCDS218.1">
    <molecule id="P47736-1"/>
</dbReference>
<dbReference type="CCDS" id="CCDS53276.1">
    <molecule id="P47736-2"/>
</dbReference>
<dbReference type="CCDS" id="CCDS53277.1">
    <molecule id="P47736-4"/>
</dbReference>
<dbReference type="PIR" id="A39897">
    <property type="entry name" value="A39897"/>
</dbReference>
<dbReference type="PIR" id="B39897">
    <property type="entry name" value="B39897"/>
</dbReference>
<dbReference type="RefSeq" id="NP_001139129.1">
    <molecule id="P47736-2"/>
    <property type="nucleotide sequence ID" value="NM_001145657.3"/>
</dbReference>
<dbReference type="RefSeq" id="NP_001139130.1">
    <molecule id="P47736-4"/>
    <property type="nucleotide sequence ID" value="NM_001145658.3"/>
</dbReference>
<dbReference type="RefSeq" id="NP_001337456.1">
    <molecule id="P47736-1"/>
    <property type="nucleotide sequence ID" value="NM_001350527.2"/>
</dbReference>
<dbReference type="RefSeq" id="NP_001375155.1">
    <molecule id="P47736-2"/>
    <property type="nucleotide sequence ID" value="NM_001388226.1"/>
</dbReference>
<dbReference type="RefSeq" id="NP_001375156.1">
    <molecule id="P47736-2"/>
    <property type="nucleotide sequence ID" value="NM_001388227.1"/>
</dbReference>
<dbReference type="RefSeq" id="NP_001375157.1">
    <molecule id="P47736-2"/>
    <property type="nucleotide sequence ID" value="NM_001388228.1"/>
</dbReference>
<dbReference type="RefSeq" id="NP_001375158.1">
    <molecule id="P47736-2"/>
    <property type="nucleotide sequence ID" value="NM_001388229.1"/>
</dbReference>
<dbReference type="RefSeq" id="NP_001375159.1">
    <molecule id="P47736-2"/>
    <property type="nucleotide sequence ID" value="NM_001388230.1"/>
</dbReference>
<dbReference type="RefSeq" id="NP_001375165.1">
    <molecule id="P47736-1"/>
    <property type="nucleotide sequence ID" value="NM_001388236.1"/>
</dbReference>
<dbReference type="RefSeq" id="NP_001375166.1">
    <molecule id="P47736-1"/>
    <property type="nucleotide sequence ID" value="NM_001388237.1"/>
</dbReference>
<dbReference type="RefSeq" id="NP_001375167.1">
    <molecule id="P47736-1"/>
    <property type="nucleotide sequence ID" value="NM_001388238.1"/>
</dbReference>
<dbReference type="RefSeq" id="NP_001375168.1">
    <molecule id="P47736-1"/>
    <property type="nucleotide sequence ID" value="NM_001388239.1"/>
</dbReference>
<dbReference type="RefSeq" id="NP_001375169.1">
    <molecule id="P47736-1"/>
    <property type="nucleotide sequence ID" value="NM_001388240.1"/>
</dbReference>
<dbReference type="RefSeq" id="NP_001375170.1">
    <molecule id="P47736-1"/>
    <property type="nucleotide sequence ID" value="NM_001388241.1"/>
</dbReference>
<dbReference type="RefSeq" id="NP_001375171.1">
    <molecule id="P47736-1"/>
    <property type="nucleotide sequence ID" value="NM_001388242.1"/>
</dbReference>
<dbReference type="RefSeq" id="NP_001375172.1">
    <molecule id="P47736-1"/>
    <property type="nucleotide sequence ID" value="NM_001388243.1"/>
</dbReference>
<dbReference type="RefSeq" id="NP_001375213.1">
    <molecule id="P47736-1"/>
    <property type="nucleotide sequence ID" value="NM_001388284.1"/>
</dbReference>
<dbReference type="RefSeq" id="NP_001375214.1">
    <molecule id="P47736-1"/>
    <property type="nucleotide sequence ID" value="NM_001388285.1"/>
</dbReference>
<dbReference type="RefSeq" id="NP_002876.2">
    <molecule id="P47736-1"/>
    <property type="nucleotide sequence ID" value="NM_002885.4"/>
</dbReference>
<dbReference type="RefSeq" id="XP_005246012.2">
    <property type="nucleotide sequence ID" value="XM_005245955.3"/>
</dbReference>
<dbReference type="RefSeq" id="XP_016857459.1">
    <property type="nucleotide sequence ID" value="XM_017001970.1"/>
</dbReference>
<dbReference type="RefSeq" id="XP_016857462.1">
    <property type="nucleotide sequence ID" value="XM_017001973.1"/>
</dbReference>
<dbReference type="RefSeq" id="XP_016857473.1">
    <property type="nucleotide sequence ID" value="XM_017001984.1"/>
</dbReference>
<dbReference type="RefSeq" id="XP_016857475.1">
    <property type="nucleotide sequence ID" value="XM_017001986.1"/>
</dbReference>
<dbReference type="RefSeq" id="XP_016857476.1">
    <property type="nucleotide sequence ID" value="XM_017001987.1"/>
</dbReference>
<dbReference type="RefSeq" id="XP_016857477.1">
    <property type="nucleotide sequence ID" value="XM_017001988.1"/>
</dbReference>
<dbReference type="PDB" id="1SRQ">
    <property type="method" value="X-ray"/>
    <property type="resolution" value="2.90 A"/>
    <property type="chains" value="A/B/C/D=75-415"/>
</dbReference>
<dbReference type="PDB" id="3BRW">
    <property type="method" value="X-ray"/>
    <property type="resolution" value="3.40 A"/>
    <property type="chains" value="A/B/C=75-415"/>
</dbReference>
<dbReference type="PDBsum" id="1SRQ"/>
<dbReference type="PDBsum" id="3BRW"/>
<dbReference type="SMR" id="P47736"/>
<dbReference type="BioGRID" id="111844">
    <property type="interactions" value="47"/>
</dbReference>
<dbReference type="FunCoup" id="P47736">
    <property type="interactions" value="715"/>
</dbReference>
<dbReference type="IntAct" id="P47736">
    <property type="interactions" value="32"/>
</dbReference>
<dbReference type="MINT" id="P47736"/>
<dbReference type="STRING" id="9606.ENSP00000363895"/>
<dbReference type="iPTMnet" id="P47736"/>
<dbReference type="PhosphoSitePlus" id="P47736"/>
<dbReference type="BioMuta" id="RAP1GAP"/>
<dbReference type="DMDM" id="215273877"/>
<dbReference type="jPOST" id="P47736"/>
<dbReference type="MassIVE" id="P47736"/>
<dbReference type="PaxDb" id="9606-ENSP00000434033"/>
<dbReference type="PeptideAtlas" id="P47736"/>
<dbReference type="ProteomicsDB" id="55789">
    <molecule id="P47736-1"/>
</dbReference>
<dbReference type="ProteomicsDB" id="55790">
    <molecule id="P47736-2"/>
</dbReference>
<dbReference type="ProteomicsDB" id="55791">
    <molecule id="P47736-3"/>
</dbReference>
<dbReference type="Pumba" id="P47736"/>
<dbReference type="Antibodypedia" id="1096">
    <property type="antibodies" value="246 antibodies from 31 providers"/>
</dbReference>
<dbReference type="DNASU" id="5909"/>
<dbReference type="Ensembl" id="ENST00000374765.9">
    <molecule id="P47736-1"/>
    <property type="protein sequence ID" value="ENSP00000363897.4"/>
    <property type="gene ID" value="ENSG00000076864.21"/>
</dbReference>
<dbReference type="Ensembl" id="ENST00000495204.5">
    <molecule id="P47736-4"/>
    <property type="protein sequence ID" value="ENSP00000434033.2"/>
    <property type="gene ID" value="ENSG00000076864.21"/>
</dbReference>
<dbReference type="Ensembl" id="ENST00000542643.6">
    <molecule id="P47736-2"/>
    <property type="protein sequence ID" value="ENSP00000441661.1"/>
    <property type="gene ID" value="ENSG00000076864.21"/>
</dbReference>
<dbReference type="GeneID" id="5909"/>
<dbReference type="KEGG" id="hsa:5909"/>
<dbReference type="MANE-Select" id="ENST00000374765.9">
    <property type="protein sequence ID" value="ENSP00000363897.4"/>
    <property type="RefSeq nucleotide sequence ID" value="NM_002885.4"/>
    <property type="RefSeq protein sequence ID" value="NP_002876.2"/>
</dbReference>
<dbReference type="UCSC" id="uc001bew.4">
    <molecule id="P47736-1"/>
    <property type="organism name" value="human"/>
</dbReference>
<dbReference type="AGR" id="HGNC:9858"/>
<dbReference type="CTD" id="5909"/>
<dbReference type="DisGeNET" id="5909"/>
<dbReference type="GeneCards" id="RAP1GAP"/>
<dbReference type="HGNC" id="HGNC:9858">
    <property type="gene designation" value="RAP1GAP"/>
</dbReference>
<dbReference type="HPA" id="ENSG00000076864">
    <property type="expression patterns" value="Tissue enhanced (brain, kidney, thyroid gland)"/>
</dbReference>
<dbReference type="MIM" id="600278">
    <property type="type" value="gene"/>
</dbReference>
<dbReference type="neXtProt" id="NX_P47736"/>
<dbReference type="OpenTargets" id="ENSG00000076864"/>
<dbReference type="PharmGKB" id="PA34220"/>
<dbReference type="VEuPathDB" id="HostDB:ENSG00000076864"/>
<dbReference type="eggNOG" id="KOG3686">
    <property type="taxonomic scope" value="Eukaryota"/>
</dbReference>
<dbReference type="GeneTree" id="ENSGT00940000156138"/>
<dbReference type="InParanoid" id="P47736"/>
<dbReference type="OMA" id="HHSAAME"/>
<dbReference type="OrthoDB" id="2499658at2759"/>
<dbReference type="PAN-GO" id="P47736">
    <property type="GO annotations" value="4 GO annotations based on evolutionary models"/>
</dbReference>
<dbReference type="PhylomeDB" id="P47736"/>
<dbReference type="TreeFam" id="TF318626"/>
<dbReference type="PathwayCommons" id="P47736"/>
<dbReference type="Reactome" id="R-HSA-392517">
    <property type="pathway name" value="Rap1 signalling"/>
</dbReference>
<dbReference type="Reactome" id="R-HSA-8853659">
    <property type="pathway name" value="RET signaling"/>
</dbReference>
<dbReference type="SignaLink" id="P47736"/>
<dbReference type="SIGNOR" id="P47736"/>
<dbReference type="BioGRID-ORCS" id="5909">
    <property type="hits" value="10 hits in 1167 CRISPR screens"/>
</dbReference>
<dbReference type="CD-CODE" id="FB4E32DD">
    <property type="entry name" value="Presynaptic clusters and postsynaptic densities"/>
</dbReference>
<dbReference type="EvolutionaryTrace" id="P47736"/>
<dbReference type="GeneWiki" id="RAP1GAP"/>
<dbReference type="GenomeRNAi" id="5909"/>
<dbReference type="Pharos" id="P47736">
    <property type="development level" value="Tbio"/>
</dbReference>
<dbReference type="PRO" id="PR:P47736"/>
<dbReference type="Proteomes" id="UP000005640">
    <property type="component" value="Chromosome 1"/>
</dbReference>
<dbReference type="RNAct" id="P47736">
    <property type="molecule type" value="protein"/>
</dbReference>
<dbReference type="Bgee" id="ENSG00000076864">
    <property type="expression patterns" value="Expressed in renal medulla and 158 other cell types or tissues"/>
</dbReference>
<dbReference type="ExpressionAtlas" id="P47736">
    <property type="expression patterns" value="baseline and differential"/>
</dbReference>
<dbReference type="GO" id="GO:0030424">
    <property type="term" value="C:axon"/>
    <property type="evidence" value="ECO:0007669"/>
    <property type="project" value="Ensembl"/>
</dbReference>
<dbReference type="GO" id="GO:0005737">
    <property type="term" value="C:cytoplasm"/>
    <property type="evidence" value="ECO:0000318"/>
    <property type="project" value="GO_Central"/>
</dbReference>
<dbReference type="GO" id="GO:0005829">
    <property type="term" value="C:cytosol"/>
    <property type="evidence" value="ECO:0000314"/>
    <property type="project" value="UniProtKB"/>
</dbReference>
<dbReference type="GO" id="GO:0030425">
    <property type="term" value="C:dendrite"/>
    <property type="evidence" value="ECO:0007669"/>
    <property type="project" value="Ensembl"/>
</dbReference>
<dbReference type="GO" id="GO:0005769">
    <property type="term" value="C:early endosome"/>
    <property type="evidence" value="ECO:0007669"/>
    <property type="project" value="Ensembl"/>
</dbReference>
<dbReference type="GO" id="GO:0000139">
    <property type="term" value="C:Golgi membrane"/>
    <property type="evidence" value="ECO:0007669"/>
    <property type="project" value="UniProtKB-SubCell"/>
</dbReference>
<dbReference type="GO" id="GO:0016020">
    <property type="term" value="C:membrane"/>
    <property type="evidence" value="ECO:0000314"/>
    <property type="project" value="UniProtKB"/>
</dbReference>
<dbReference type="GO" id="GO:0043025">
    <property type="term" value="C:neuronal cell body"/>
    <property type="evidence" value="ECO:0007669"/>
    <property type="project" value="Ensembl"/>
</dbReference>
<dbReference type="GO" id="GO:0005096">
    <property type="term" value="F:GTPase activator activity"/>
    <property type="evidence" value="ECO:0000314"/>
    <property type="project" value="UniProtKB"/>
</dbReference>
<dbReference type="GO" id="GO:0003924">
    <property type="term" value="F:GTPase activity"/>
    <property type="evidence" value="ECO:0000303"/>
    <property type="project" value="UniProtKB"/>
</dbReference>
<dbReference type="GO" id="GO:0042803">
    <property type="term" value="F:protein homodimerization activity"/>
    <property type="evidence" value="ECO:0000353"/>
    <property type="project" value="UniProtKB"/>
</dbReference>
<dbReference type="GO" id="GO:0031267">
    <property type="term" value="F:small GTPase binding"/>
    <property type="evidence" value="ECO:0000353"/>
    <property type="project" value="UniProtKB"/>
</dbReference>
<dbReference type="GO" id="GO:0002250">
    <property type="term" value="P:adaptive immune response"/>
    <property type="evidence" value="ECO:0000304"/>
    <property type="project" value="Reactome"/>
</dbReference>
<dbReference type="GO" id="GO:0098609">
    <property type="term" value="P:cell-cell adhesion"/>
    <property type="evidence" value="ECO:0007669"/>
    <property type="project" value="Ensembl"/>
</dbReference>
<dbReference type="GO" id="GO:1990792">
    <property type="term" value="P:cellular response to glial cell derived neurotrophic factor"/>
    <property type="evidence" value="ECO:0007669"/>
    <property type="project" value="Ensembl"/>
</dbReference>
<dbReference type="GO" id="GO:0051649">
    <property type="term" value="P:establishment of localization in cell"/>
    <property type="evidence" value="ECO:0007669"/>
    <property type="project" value="Ensembl"/>
</dbReference>
<dbReference type="GO" id="GO:1903697">
    <property type="term" value="P:negative regulation of microvillus assembly"/>
    <property type="evidence" value="ECO:0000315"/>
    <property type="project" value="UniProtKB"/>
</dbReference>
<dbReference type="GO" id="GO:0045665">
    <property type="term" value="P:negative regulation of neuron differentiation"/>
    <property type="evidence" value="ECO:0007669"/>
    <property type="project" value="Ensembl"/>
</dbReference>
<dbReference type="GO" id="GO:1904442">
    <property type="term" value="P:negative regulation of thyroid gland epithelial cell proliferation"/>
    <property type="evidence" value="ECO:0007669"/>
    <property type="project" value="Ensembl"/>
</dbReference>
<dbReference type="GO" id="GO:0006909">
    <property type="term" value="P:phagocytosis"/>
    <property type="evidence" value="ECO:0007669"/>
    <property type="project" value="Ensembl"/>
</dbReference>
<dbReference type="GO" id="GO:0022409">
    <property type="term" value="P:positive regulation of cell-cell adhesion"/>
    <property type="evidence" value="ECO:0007669"/>
    <property type="project" value="Ensembl"/>
</dbReference>
<dbReference type="GO" id="GO:0043547">
    <property type="term" value="P:positive regulation of GTPase activity"/>
    <property type="evidence" value="ECO:0000314"/>
    <property type="project" value="UniProtKB"/>
</dbReference>
<dbReference type="GO" id="GO:0050766">
    <property type="term" value="P:positive regulation of phagocytosis"/>
    <property type="evidence" value="ECO:0007669"/>
    <property type="project" value="Ensembl"/>
</dbReference>
<dbReference type="GO" id="GO:0043087">
    <property type="term" value="P:regulation of GTPase activity"/>
    <property type="evidence" value="ECO:0000314"/>
    <property type="project" value="UniProtKB"/>
</dbReference>
<dbReference type="GO" id="GO:0051056">
    <property type="term" value="P:regulation of small GTPase mediated signal transduction"/>
    <property type="evidence" value="ECO:0007669"/>
    <property type="project" value="InterPro"/>
</dbReference>
<dbReference type="GO" id="GO:0007165">
    <property type="term" value="P:signal transduction"/>
    <property type="evidence" value="ECO:0000304"/>
    <property type="project" value="ProtInc"/>
</dbReference>
<dbReference type="FunFam" id="3.40.50.11210:FF:000003">
    <property type="entry name" value="RAP1 GTPase activating protein 2"/>
    <property type="match status" value="1"/>
</dbReference>
<dbReference type="Gene3D" id="6.10.140.210">
    <property type="match status" value="1"/>
</dbReference>
<dbReference type="Gene3D" id="3.40.50.11210">
    <property type="entry name" value="Rap/Ran-GAP"/>
    <property type="match status" value="1"/>
</dbReference>
<dbReference type="InterPro" id="IPR003109">
    <property type="entry name" value="GoLoco_motif"/>
</dbReference>
<dbReference type="InterPro" id="IPR035974">
    <property type="entry name" value="Rap/Ran-GAP_sf"/>
</dbReference>
<dbReference type="InterPro" id="IPR000331">
    <property type="entry name" value="Rap/Ran_GAP_dom"/>
</dbReference>
<dbReference type="InterPro" id="IPR050989">
    <property type="entry name" value="Rap1_Ran_GAP"/>
</dbReference>
<dbReference type="PANTHER" id="PTHR15711">
    <property type="entry name" value="RAP GTPASE-ACTIVATING PROTEIN"/>
    <property type="match status" value="1"/>
</dbReference>
<dbReference type="PANTHER" id="PTHR15711:SF3">
    <property type="entry name" value="RAP1 GTPASE-ACTIVATING PROTEIN 1"/>
    <property type="match status" value="1"/>
</dbReference>
<dbReference type="Pfam" id="PF02188">
    <property type="entry name" value="GoLoco"/>
    <property type="match status" value="1"/>
</dbReference>
<dbReference type="Pfam" id="PF21022">
    <property type="entry name" value="Rap-GAP_dimer"/>
    <property type="match status" value="1"/>
</dbReference>
<dbReference type="Pfam" id="PF02145">
    <property type="entry name" value="Rap_GAP"/>
    <property type="match status" value="1"/>
</dbReference>
<dbReference type="SMART" id="SM00390">
    <property type="entry name" value="GoLoco"/>
    <property type="match status" value="1"/>
</dbReference>
<dbReference type="SUPFAM" id="SSF111347">
    <property type="entry name" value="Rap/Ran-GAP"/>
    <property type="match status" value="1"/>
</dbReference>
<dbReference type="PROSITE" id="PS50877">
    <property type="entry name" value="GOLOCO"/>
    <property type="match status" value="1"/>
</dbReference>
<dbReference type="PROSITE" id="PS50085">
    <property type="entry name" value="RAPGAP"/>
    <property type="match status" value="1"/>
</dbReference>
<comment type="function">
    <text evidence="5">GTPase activator for the nuclear Ras-related regulatory protein RAP-1A (KREV-1), converting it to the putatively inactive GDP-bound state.</text>
</comment>
<comment type="subunit">
    <text evidence="5 7">Homodimer and heterodimer with RAP1B.</text>
</comment>
<comment type="interaction">
    <interactant intactId="EBI-722307">
        <id>P47736</id>
    </interactant>
    <interactant intactId="EBI-395638">
        <id>O14645</id>
        <label>DNALI1</label>
    </interactant>
    <organismsDiffer>false</organismsDiffer>
    <experiments>3</experiments>
</comment>
<comment type="interaction">
    <interactant intactId="EBI-722307">
        <id>P47736</id>
    </interactant>
    <interactant intactId="EBI-948266">
        <id>O14901</id>
        <label>KLF11</label>
    </interactant>
    <organismsDiffer>false</organismsDiffer>
    <experiments>3</experiments>
</comment>
<comment type="interaction">
    <interactant intactId="EBI-722307">
        <id>P47736</id>
    </interactant>
    <interactant intactId="EBI-358143">
        <id>P61224</id>
        <label>RAP1B</label>
    </interactant>
    <organismsDiffer>false</organismsDiffer>
    <experiments>3</experiments>
</comment>
<comment type="interaction">
    <interactant intactId="EBI-722307">
        <id>P47736</id>
    </interactant>
    <interactant intactId="EBI-3452992">
        <id>Q684P5</id>
        <label>RAP1GAP2</label>
    </interactant>
    <organismsDiffer>false</organismsDiffer>
    <experiments>2</experiments>
</comment>
<comment type="subcellular location">
    <subcellularLocation>
        <location>Golgi apparatus membrane</location>
        <topology>Peripheral membrane protein</topology>
    </subcellularLocation>
</comment>
<comment type="alternative products">
    <event type="alternative splicing"/>
    <isoform>
        <id>P47736-1</id>
        <name>1</name>
        <sequence type="displayed"/>
    </isoform>
    <isoform>
        <id>P47736-2</id>
        <name>2</name>
        <sequence type="described" ref="VSP_035256 VSP_035257"/>
    </isoform>
    <isoform>
        <id>P47736-3</id>
        <name>3</name>
        <sequence type="described" ref="VSP_040260 VSP_040261"/>
    </isoform>
    <isoform>
        <id>P47736-4</id>
        <name>4</name>
        <sequence type="described" ref="VSP_047025"/>
    </isoform>
</comment>
<comment type="tissue specificity">
    <text evidence="9">Significant expression seen in the brain, kidney and pancreas. Abundant in the cerebral cortex and expressed at much lower levels in the spinal cord. Not detected in the lymphoid tissues.</text>
</comment>
<comment type="induction">
    <text evidence="9">By 12-O-tetradecanoylphorbol-13-acetate (TPA) in promyelocytic HL-60 cells.</text>
</comment>
<comment type="sequence caution" evidence="12">
    <conflict type="erroneous initiation">
        <sequence resource="EMBL-CDS" id="AAH54490"/>
    </conflict>
    <text>Truncated N-terminus.</text>
</comment>
<comment type="sequence caution" evidence="12">
    <conflict type="erroneous initiation">
        <sequence resource="EMBL-CDS" id="BAA32319"/>
    </conflict>
    <text>Extended N-terminus.</text>
</comment>
<comment type="online information" name="Atlas of Genetics and Cytogenetics in Oncology and Haematology">
    <link uri="https://atlasgeneticsoncology.org/gene/42043/RAP1GAP"/>
</comment>
<feature type="chain" id="PRO_0000056743" description="Rap1 GTPase-activating protein 1">
    <location>
        <begin position="1"/>
        <end position="663"/>
    </location>
</feature>
<feature type="domain" description="GoLoco" evidence="2">
    <location>
        <begin position="1"/>
        <end position="17"/>
    </location>
</feature>
<feature type="domain" description="Rap-GAP" evidence="3">
    <location>
        <begin position="181"/>
        <end position="397"/>
    </location>
</feature>
<feature type="region of interest" description="Disordered" evidence="4">
    <location>
        <begin position="1"/>
        <end position="23"/>
    </location>
</feature>
<feature type="region of interest" description="Disordered" evidence="4">
    <location>
        <begin position="442"/>
        <end position="604"/>
    </location>
</feature>
<feature type="region of interest" description="Disordered" evidence="4">
    <location>
        <begin position="616"/>
        <end position="645"/>
    </location>
</feature>
<feature type="compositionally biased region" description="Polar residues" evidence="4">
    <location>
        <begin position="450"/>
        <end position="465"/>
    </location>
</feature>
<feature type="compositionally biased region" description="Polar residues" evidence="4">
    <location>
        <begin position="535"/>
        <end position="549"/>
    </location>
</feature>
<feature type="compositionally biased region" description="Low complexity" evidence="4">
    <location>
        <begin position="567"/>
        <end position="579"/>
    </location>
</feature>
<feature type="compositionally biased region" description="Acidic residues" evidence="4">
    <location>
        <begin position="580"/>
        <end position="591"/>
    </location>
</feature>
<feature type="compositionally biased region" description="Low complexity" evidence="4">
    <location>
        <begin position="616"/>
        <end position="630"/>
    </location>
</feature>
<feature type="modified residue" description="Phosphoserine" evidence="15">
    <location>
        <position position="441"/>
    </location>
</feature>
<feature type="modified residue" description="Phosphoserine" evidence="13 15">
    <location>
        <position position="484"/>
    </location>
</feature>
<feature type="modified residue" description="Phosphoserine" evidence="13 15 16">
    <location>
        <position position="499"/>
    </location>
</feature>
<feature type="modified residue" description="Phosphoserine" evidence="15">
    <location>
        <position position="515"/>
    </location>
</feature>
<feature type="modified residue" description="Phosphoserine" evidence="1">
    <location>
        <position position="541"/>
    </location>
</feature>
<feature type="modified residue" description="Phosphoserine" evidence="1">
    <location>
        <position position="542"/>
    </location>
</feature>
<feature type="splice variant" id="VSP_040260" description="In isoform 3." evidence="10">
    <original>M</original>
    <variation>MAQLRPAVPPGRPRRGSLPAGASWQNTDLFEM</variation>
    <location>
        <position position="1"/>
    </location>
</feature>
<feature type="splice variant" id="VSP_047025" description="In isoform 4." evidence="12">
    <original>M</original>
    <variation>MSGRKRSFTFGAYGGVDKSFTSRRSVWRSDGQNQHFPQALDLSRVNLVPSYTPSLYPKNTDLFEM</variation>
    <location>
        <position position="1"/>
    </location>
</feature>
<feature type="splice variant" id="VSP_040261" description="In isoform 3." evidence="10">
    <location>
        <position position="280"/>
    </location>
</feature>
<feature type="splice variant" id="VSP_035256" description="In isoform 2." evidence="11">
    <original>I</original>
    <variation>ISLLIPGKSASRFGRRGSAIGIGTVEE</variation>
    <location>
        <position position="476"/>
    </location>
</feature>
<feature type="splice variant" id="VSP_035257" description="In isoform 2." evidence="11">
    <location>
        <begin position="626"/>
        <end position="633"/>
    </location>
</feature>
<feature type="sequence variant" id="VAR_047792" description="In dbSNP:rs2275363." evidence="8">
    <original>A</original>
    <variation>T</variation>
    <location>
        <position position="107"/>
    </location>
</feature>
<feature type="sequence variant" id="VAR_035547" description="In a breast cancer sample; somatic mutation." evidence="6">
    <original>C</original>
    <variation>R</variation>
    <location>
        <position position="257"/>
    </location>
</feature>
<feature type="sequence variant" id="VAR_035548" description="In a breast cancer sample; somatic mutation; dbSNP:rs147394161." evidence="6">
    <original>Y</original>
    <variation>C</variation>
    <location>
        <position position="609"/>
    </location>
</feature>
<feature type="mutagenesis site" description="Impaired dimerization; when associated with E-173." evidence="5">
    <original>F</original>
    <variation>E</variation>
    <location>
        <position position="100"/>
    </location>
</feature>
<feature type="mutagenesis site" description="Impaired dimerization; when associated with E-100." evidence="5">
    <original>L</original>
    <variation>E</variation>
    <location>
        <position position="173"/>
    </location>
</feature>
<feature type="mutagenesis site" description="Reduces GTPase activation." evidence="5">
    <original>E</original>
    <variation>A</variation>
    <location>
        <position position="207"/>
    </location>
</feature>
<feature type="mutagenesis site" description="Abolishes GTPase activation." evidence="5">
    <original>H</original>
    <variation>A</variation>
    <location>
        <position position="267"/>
    </location>
</feature>
<feature type="mutagenesis site" description="Reduces GTPase activation." evidence="5">
    <original>R</original>
    <variation>A</variation>
    <location>
        <position position="286"/>
    </location>
</feature>
<feature type="mutagenesis site" description="Abolishes GTPase activation." evidence="5">
    <original>H</original>
    <variation>A</variation>
    <location>
        <position position="287"/>
    </location>
</feature>
<feature type="mutagenesis site" description="Abolishes GTPase activation." evidence="5">
    <original>N</original>
    <variation>A</variation>
    <variation>K</variation>
    <location>
        <position position="290"/>
    </location>
</feature>
<feature type="mutagenesis site" description="Abolishes GTPase activation." evidence="5">
    <original>D</original>
    <variation>A</variation>
    <location>
        <position position="291"/>
    </location>
</feature>
<feature type="mutagenesis site" description="Reduces GTPase activation." evidence="5">
    <original>R</original>
    <variation>A</variation>
    <variation>P</variation>
    <location>
        <position position="388"/>
    </location>
</feature>
<feature type="sequence conflict" description="In Ref. 6; AAH54490." evidence="12" ref="6">
    <original>F</original>
    <variation>L</variation>
    <location>
        <position position="304"/>
    </location>
</feature>
<feature type="helix" evidence="17">
    <location>
        <begin position="85"/>
        <end position="88"/>
    </location>
</feature>
<feature type="helix" evidence="17">
    <location>
        <begin position="89"/>
        <end position="93"/>
    </location>
</feature>
<feature type="turn" evidence="17">
    <location>
        <begin position="94"/>
        <end position="96"/>
    </location>
</feature>
<feature type="strand" evidence="17">
    <location>
        <begin position="100"/>
        <end position="106"/>
    </location>
</feature>
<feature type="turn" evidence="17">
    <location>
        <begin position="107"/>
        <end position="109"/>
    </location>
</feature>
<feature type="strand" evidence="17">
    <location>
        <begin position="110"/>
        <end position="121"/>
    </location>
</feature>
<feature type="strand" evidence="17">
    <location>
        <begin position="124"/>
        <end position="132"/>
    </location>
</feature>
<feature type="strand" evidence="17">
    <location>
        <begin position="137"/>
        <end position="143"/>
    </location>
</feature>
<feature type="helix" evidence="17">
    <location>
        <begin position="153"/>
        <end position="160"/>
    </location>
</feature>
<feature type="helix" evidence="17">
    <location>
        <begin position="177"/>
        <end position="186"/>
    </location>
</feature>
<feature type="strand" evidence="17">
    <location>
        <begin position="192"/>
        <end position="200"/>
    </location>
</feature>
<feature type="helix" evidence="17">
    <location>
        <begin position="207"/>
        <end position="211"/>
    </location>
</feature>
<feature type="helix" evidence="17">
    <location>
        <begin position="218"/>
        <end position="227"/>
    </location>
</feature>
<feature type="strand" evidence="17">
    <location>
        <begin position="228"/>
        <end position="233"/>
    </location>
</feature>
<feature type="strand" evidence="17">
    <location>
        <begin position="245"/>
        <end position="247"/>
    </location>
</feature>
<feature type="strand" evidence="17">
    <location>
        <begin position="252"/>
        <end position="258"/>
    </location>
</feature>
<feature type="strand" evidence="17">
    <location>
        <begin position="263"/>
        <end position="268"/>
    </location>
</feature>
<feature type="helix" evidence="17">
    <location>
        <begin position="269"/>
        <end position="271"/>
    </location>
</feature>
<feature type="helix" evidence="17">
    <location>
        <begin position="282"/>
        <end position="288"/>
    </location>
</feature>
<feature type="strand" evidence="17">
    <location>
        <begin position="292"/>
        <end position="300"/>
    </location>
</feature>
<feature type="helix" evidence="17">
    <location>
        <begin position="306"/>
        <end position="308"/>
    </location>
</feature>
<feature type="strand" evidence="17">
    <location>
        <begin position="316"/>
        <end position="323"/>
    </location>
</feature>
<feature type="strand" evidence="18">
    <location>
        <begin position="327"/>
        <end position="329"/>
    </location>
</feature>
<feature type="strand" evidence="17">
    <location>
        <begin position="331"/>
        <end position="338"/>
    </location>
</feature>
<feature type="strand" evidence="17">
    <location>
        <begin position="354"/>
        <end position="358"/>
    </location>
</feature>
<feature type="helix" evidence="17">
    <location>
        <begin position="359"/>
        <end position="376"/>
    </location>
</feature>
<feature type="helix" evidence="17">
    <location>
        <begin position="380"/>
        <end position="409"/>
    </location>
</feature>
<feature type="modified residue" description="Phosphoserine" evidence="14">
    <location sequence="P47736-3">
        <position position="17"/>
    </location>
</feature>
<keyword id="KW-0002">3D-structure</keyword>
<keyword id="KW-0025">Alternative splicing</keyword>
<keyword id="KW-0333">Golgi apparatus</keyword>
<keyword id="KW-0343">GTPase activation</keyword>
<keyword id="KW-0472">Membrane</keyword>
<keyword id="KW-0597">Phosphoprotein</keyword>
<keyword id="KW-1267">Proteomics identification</keyword>
<keyword id="KW-1185">Reference proteome</keyword>
<reference key="1">
    <citation type="journal article" date="1991" name="Cell">
        <title>Molecular cloning of a GTPase activating protein specific for the Krev-1 protein p21rap1.</title>
        <authorList>
            <person name="Rubinfeld B."/>
            <person name="Munemitsu S."/>
            <person name="Clark R."/>
            <person name="Conroy L."/>
            <person name="Watt K."/>
            <person name="Crosier W.J."/>
            <person name="McCormick F."/>
            <person name="Polakis P."/>
        </authorList>
    </citation>
    <scope>NUCLEOTIDE SEQUENCE [MRNA] (ISOFORM 1)</scope>
    <scope>VARIANT THR-107</scope>
    <source>
        <tissue>Brain</tissue>
    </source>
</reference>
<reference key="2">
    <citation type="journal article" date="1997" name="DNA Res.">
        <title>Characterization of cDNA clones in size-fractionated cDNA libraries from human brain.</title>
        <authorList>
            <person name="Seki N."/>
            <person name="Ohira M."/>
            <person name="Nagase T."/>
            <person name="Ishikawa K."/>
            <person name="Miyajima N."/>
            <person name="Nakajima D."/>
            <person name="Nomura N."/>
            <person name="Ohara O."/>
        </authorList>
    </citation>
    <scope>NUCLEOTIDE SEQUENCE [LARGE SCALE MRNA] (ISOFORM 2)</scope>
    <source>
        <tissue>Brain</tissue>
    </source>
</reference>
<reference key="3">
    <citation type="journal article" date="2006" name="Nature">
        <title>The DNA sequence and biological annotation of human chromosome 1.</title>
        <authorList>
            <person name="Gregory S.G."/>
            <person name="Barlow K.F."/>
            <person name="McLay K.E."/>
            <person name="Kaul R."/>
            <person name="Swarbreck D."/>
            <person name="Dunham A."/>
            <person name="Scott C.E."/>
            <person name="Howe K.L."/>
            <person name="Woodfine K."/>
            <person name="Spencer C.C.A."/>
            <person name="Jones M.C."/>
            <person name="Gillson C."/>
            <person name="Searle S."/>
            <person name="Zhou Y."/>
            <person name="Kokocinski F."/>
            <person name="McDonald L."/>
            <person name="Evans R."/>
            <person name="Phillips K."/>
            <person name="Atkinson A."/>
            <person name="Cooper R."/>
            <person name="Jones C."/>
            <person name="Hall R.E."/>
            <person name="Andrews T.D."/>
            <person name="Lloyd C."/>
            <person name="Ainscough R."/>
            <person name="Almeida J.P."/>
            <person name="Ambrose K.D."/>
            <person name="Anderson F."/>
            <person name="Andrew R.W."/>
            <person name="Ashwell R.I.S."/>
            <person name="Aubin K."/>
            <person name="Babbage A.K."/>
            <person name="Bagguley C.L."/>
            <person name="Bailey J."/>
            <person name="Beasley H."/>
            <person name="Bethel G."/>
            <person name="Bird C.P."/>
            <person name="Bray-Allen S."/>
            <person name="Brown J.Y."/>
            <person name="Brown A.J."/>
            <person name="Buckley D."/>
            <person name="Burton J."/>
            <person name="Bye J."/>
            <person name="Carder C."/>
            <person name="Chapman J.C."/>
            <person name="Clark S.Y."/>
            <person name="Clarke G."/>
            <person name="Clee C."/>
            <person name="Cobley V."/>
            <person name="Collier R.E."/>
            <person name="Corby N."/>
            <person name="Coville G.J."/>
            <person name="Davies J."/>
            <person name="Deadman R."/>
            <person name="Dunn M."/>
            <person name="Earthrowl M."/>
            <person name="Ellington A.G."/>
            <person name="Errington H."/>
            <person name="Frankish A."/>
            <person name="Frankland J."/>
            <person name="French L."/>
            <person name="Garner P."/>
            <person name="Garnett J."/>
            <person name="Gay L."/>
            <person name="Ghori M.R.J."/>
            <person name="Gibson R."/>
            <person name="Gilby L.M."/>
            <person name="Gillett W."/>
            <person name="Glithero R.J."/>
            <person name="Grafham D.V."/>
            <person name="Griffiths C."/>
            <person name="Griffiths-Jones S."/>
            <person name="Grocock R."/>
            <person name="Hammond S."/>
            <person name="Harrison E.S.I."/>
            <person name="Hart E."/>
            <person name="Haugen E."/>
            <person name="Heath P.D."/>
            <person name="Holmes S."/>
            <person name="Holt K."/>
            <person name="Howden P.J."/>
            <person name="Hunt A.R."/>
            <person name="Hunt S.E."/>
            <person name="Hunter G."/>
            <person name="Isherwood J."/>
            <person name="James R."/>
            <person name="Johnson C."/>
            <person name="Johnson D."/>
            <person name="Joy A."/>
            <person name="Kay M."/>
            <person name="Kershaw J.K."/>
            <person name="Kibukawa M."/>
            <person name="Kimberley A.M."/>
            <person name="King A."/>
            <person name="Knights A.J."/>
            <person name="Lad H."/>
            <person name="Laird G."/>
            <person name="Lawlor S."/>
            <person name="Leongamornlert D.A."/>
            <person name="Lloyd D.M."/>
            <person name="Loveland J."/>
            <person name="Lovell J."/>
            <person name="Lush M.J."/>
            <person name="Lyne R."/>
            <person name="Martin S."/>
            <person name="Mashreghi-Mohammadi M."/>
            <person name="Matthews L."/>
            <person name="Matthews N.S.W."/>
            <person name="McLaren S."/>
            <person name="Milne S."/>
            <person name="Mistry S."/>
            <person name="Moore M.J.F."/>
            <person name="Nickerson T."/>
            <person name="O'Dell C.N."/>
            <person name="Oliver K."/>
            <person name="Palmeiri A."/>
            <person name="Palmer S.A."/>
            <person name="Parker A."/>
            <person name="Patel D."/>
            <person name="Pearce A.V."/>
            <person name="Peck A.I."/>
            <person name="Pelan S."/>
            <person name="Phelps K."/>
            <person name="Phillimore B.J."/>
            <person name="Plumb R."/>
            <person name="Rajan J."/>
            <person name="Raymond C."/>
            <person name="Rouse G."/>
            <person name="Saenphimmachak C."/>
            <person name="Sehra H.K."/>
            <person name="Sheridan E."/>
            <person name="Shownkeen R."/>
            <person name="Sims S."/>
            <person name="Skuce C.D."/>
            <person name="Smith M."/>
            <person name="Steward C."/>
            <person name="Subramanian S."/>
            <person name="Sycamore N."/>
            <person name="Tracey A."/>
            <person name="Tromans A."/>
            <person name="Van Helmond Z."/>
            <person name="Wall M."/>
            <person name="Wallis J.M."/>
            <person name="White S."/>
            <person name="Whitehead S.L."/>
            <person name="Wilkinson J.E."/>
            <person name="Willey D.L."/>
            <person name="Williams H."/>
            <person name="Wilming L."/>
            <person name="Wray P.W."/>
            <person name="Wu Z."/>
            <person name="Coulson A."/>
            <person name="Vaudin M."/>
            <person name="Sulston J.E."/>
            <person name="Durbin R.M."/>
            <person name="Hubbard T."/>
            <person name="Wooster R."/>
            <person name="Dunham I."/>
            <person name="Carter N.P."/>
            <person name="McVean G."/>
            <person name="Ross M.T."/>
            <person name="Harrow J."/>
            <person name="Olson M.V."/>
            <person name="Beck S."/>
            <person name="Rogers J."/>
            <person name="Bentley D.R."/>
        </authorList>
    </citation>
    <scope>NUCLEOTIDE SEQUENCE [LARGE SCALE GENOMIC DNA]</scope>
</reference>
<reference key="4">
    <citation type="submission" date="2005-07" db="EMBL/GenBank/DDBJ databases">
        <authorList>
            <person name="Mural R.J."/>
            <person name="Istrail S."/>
            <person name="Sutton G.G."/>
            <person name="Florea L."/>
            <person name="Halpern A.L."/>
            <person name="Mobarry C.M."/>
            <person name="Lippert R."/>
            <person name="Walenz B."/>
            <person name="Shatkay H."/>
            <person name="Dew I."/>
            <person name="Miller J.R."/>
            <person name="Flanigan M.J."/>
            <person name="Edwards N.J."/>
            <person name="Bolanos R."/>
            <person name="Fasulo D."/>
            <person name="Halldorsson B.V."/>
            <person name="Hannenhalli S."/>
            <person name="Turner R."/>
            <person name="Yooseph S."/>
            <person name="Lu F."/>
            <person name="Nusskern D.R."/>
            <person name="Shue B.C."/>
            <person name="Zheng X.H."/>
            <person name="Zhong F."/>
            <person name="Delcher A.L."/>
            <person name="Huson D.H."/>
            <person name="Kravitz S.A."/>
            <person name="Mouchard L."/>
            <person name="Reinert K."/>
            <person name="Remington K.A."/>
            <person name="Clark A.G."/>
            <person name="Waterman M.S."/>
            <person name="Eichler E.E."/>
            <person name="Adams M.D."/>
            <person name="Hunkapiller M.W."/>
            <person name="Myers E.W."/>
            <person name="Venter J.C."/>
        </authorList>
    </citation>
    <scope>NUCLEOTIDE SEQUENCE [LARGE SCALE GENOMIC DNA]</scope>
</reference>
<reference key="5">
    <citation type="journal article" date="1999" name="Nature">
        <title>Activation of the ERK/MAPK pathway by an isoform of rap1GAP associated with G alpha(i).</title>
        <authorList>
            <person name="Mochizuki N."/>
            <person name="Ohba Y."/>
            <person name="Kiyokawa E."/>
            <person name="Kurata T."/>
            <person name="Murakami Y."/>
            <person name="Ozaki Y."/>
            <person name="Kitakabe A."/>
            <person name="Nagashima K."/>
            <person name="Matsuda M."/>
        </authorList>
    </citation>
    <scope>NUCLEOTIDE SEQUENCE [MRNA] OF 1-100 (ISOFORM 3)</scope>
    <source>
        <tissue>Brain</tissue>
    </source>
</reference>
<reference key="6">
    <citation type="journal article" date="2004" name="Genome Res.">
        <title>The status, quality, and expansion of the NIH full-length cDNA project: the Mammalian Gene Collection (MGC).</title>
        <authorList>
            <consortium name="The MGC Project Team"/>
        </authorList>
    </citation>
    <scope>PARTIAL NUCLEOTIDE SEQUENCE [LARGE SCALE MRNA] (ISOFORM 4)</scope>
    <source>
        <tissue>Brain</tissue>
    </source>
</reference>
<reference key="7">
    <citation type="journal article" date="1997" name="J. Biol. Chem.">
        <title>Human SPA-1 product selectively expressed in lymphoid tissues is a specific GTPase-activating protein for Rap1 and Rap2.</title>
        <authorList>
            <person name="Kurachi H."/>
            <person name="Wada Y."/>
            <person name="Tsukamoto N."/>
            <person name="Maeda M."/>
            <person name="Kubota H."/>
            <person name="Hattori M."/>
            <person name="Iwai K."/>
            <person name="Minato N."/>
        </authorList>
    </citation>
    <scope>TISSUE SPECIFICITY</scope>
    <scope>INDUCTION</scope>
</reference>
<reference key="8">
    <citation type="journal article" date="2008" name="Proc. Natl. Acad. Sci. U.S.A.">
        <title>A quantitative atlas of mitotic phosphorylation.</title>
        <authorList>
            <person name="Dephoure N."/>
            <person name="Zhou C."/>
            <person name="Villen J."/>
            <person name="Beausoleil S.A."/>
            <person name="Bakalarski C.E."/>
            <person name="Elledge S.J."/>
            <person name="Gygi S.P."/>
        </authorList>
    </citation>
    <scope>PHOSPHORYLATION [LARGE SCALE ANALYSIS] AT SER-484 AND SER-499</scope>
    <scope>IDENTIFICATION BY MASS SPECTROMETRY [LARGE SCALE ANALYSIS]</scope>
    <source>
        <tissue>Cervix carcinoma</tissue>
    </source>
</reference>
<reference key="9">
    <citation type="journal article" date="2009" name="Sci. Signal.">
        <title>Quantitative phosphoproteomic analysis of T cell receptor signaling reveals system-wide modulation of protein-protein interactions.</title>
        <authorList>
            <person name="Mayya V."/>
            <person name="Lundgren D.H."/>
            <person name="Hwang S.-I."/>
            <person name="Rezaul K."/>
            <person name="Wu L."/>
            <person name="Eng J.K."/>
            <person name="Rodionov V."/>
            <person name="Han D.K."/>
        </authorList>
    </citation>
    <scope>PHOSPHORYLATION [LARGE SCALE ANALYSIS] AT SER-17 (ISOFORM 3)</scope>
    <scope>IDENTIFICATION BY MASS SPECTROMETRY [LARGE SCALE ANALYSIS]</scope>
    <source>
        <tissue>Leukemic T-cell</tissue>
    </source>
</reference>
<reference key="10">
    <citation type="journal article" date="2009" name="Science">
        <title>Lysine acetylation targets protein complexes and co-regulates major cellular functions.</title>
        <authorList>
            <person name="Choudhary C."/>
            <person name="Kumar C."/>
            <person name="Gnad F."/>
            <person name="Nielsen M.L."/>
            <person name="Rehman M."/>
            <person name="Walther T.C."/>
            <person name="Olsen J.V."/>
            <person name="Mann M."/>
        </authorList>
    </citation>
    <scope>IDENTIFICATION BY MASS SPECTROMETRY [LARGE SCALE ANALYSIS]</scope>
</reference>
<reference key="11">
    <citation type="journal article" date="2010" name="Sci. Signal.">
        <title>Quantitative phosphoproteomics reveals widespread full phosphorylation site occupancy during mitosis.</title>
        <authorList>
            <person name="Olsen J.V."/>
            <person name="Vermeulen M."/>
            <person name="Santamaria A."/>
            <person name="Kumar C."/>
            <person name="Miller M.L."/>
            <person name="Jensen L.J."/>
            <person name="Gnad F."/>
            <person name="Cox J."/>
            <person name="Jensen T.S."/>
            <person name="Nigg E.A."/>
            <person name="Brunak S."/>
            <person name="Mann M."/>
        </authorList>
    </citation>
    <scope>IDENTIFICATION BY MASS SPECTROMETRY [LARGE SCALE ANALYSIS]</scope>
    <source>
        <tissue>Cervix carcinoma</tissue>
    </source>
</reference>
<reference key="12">
    <citation type="journal article" date="2013" name="J. Proteome Res.">
        <title>Toward a comprehensive characterization of a human cancer cell phosphoproteome.</title>
        <authorList>
            <person name="Zhou H."/>
            <person name="Di Palma S."/>
            <person name="Preisinger C."/>
            <person name="Peng M."/>
            <person name="Polat A.N."/>
            <person name="Heck A.J."/>
            <person name="Mohammed S."/>
        </authorList>
    </citation>
    <scope>PHOSPHORYLATION [LARGE SCALE ANALYSIS] AT SER-441; SER-484; SER-499 AND SER-515</scope>
    <scope>IDENTIFICATION BY MASS SPECTROMETRY [LARGE SCALE ANALYSIS]</scope>
    <source>
        <tissue>Cervix carcinoma</tissue>
        <tissue>Erythroleukemia</tissue>
    </source>
</reference>
<reference key="13">
    <citation type="journal article" date="2014" name="J. Proteomics">
        <title>An enzyme assisted RP-RPLC approach for in-depth analysis of human liver phosphoproteome.</title>
        <authorList>
            <person name="Bian Y."/>
            <person name="Song C."/>
            <person name="Cheng K."/>
            <person name="Dong M."/>
            <person name="Wang F."/>
            <person name="Huang J."/>
            <person name="Sun D."/>
            <person name="Wang L."/>
            <person name="Ye M."/>
            <person name="Zou H."/>
        </authorList>
    </citation>
    <scope>PHOSPHORYLATION [LARGE SCALE ANALYSIS] AT SER-499</scope>
    <scope>IDENTIFICATION BY MASS SPECTROMETRY [LARGE SCALE ANALYSIS]</scope>
    <source>
        <tissue>Liver</tissue>
    </source>
</reference>
<reference key="14">
    <citation type="journal article" date="2004" name="Nature">
        <title>The GTPase-activating protein Rap1GAP uses a catalytic asparagine.</title>
        <authorList>
            <person name="Daumke O."/>
            <person name="Weyand M."/>
            <person name="Chakrabarti P.P."/>
            <person name="Vetter I.R."/>
            <person name="Wittinghofer A."/>
        </authorList>
    </citation>
    <scope>X-RAY CRYSTALLOGRAPHY (2.9 ANGSTROMS) OF 75-415</scope>
    <scope>FUNCTION</scope>
    <scope>SUBUNIT</scope>
    <scope>MUTAGENESIS OF PHE-100; LEU-173; GLU-207; HIS-267; ARG-286; HIS-287; ASN-290; ASP-291 AND ARG-388</scope>
</reference>
<reference key="15">
    <citation type="journal article" date="2008" name="EMBO J.">
        <title>The Rap-RapGAP complex: GTP hydrolysis without catalytic glutamine and arginine residues.</title>
        <authorList>
            <person name="Scrima A."/>
            <person name="Thomas C."/>
            <person name="Deaconescu D."/>
            <person name="Wittinghofer A."/>
        </authorList>
    </citation>
    <scope>X-RAY CRYSTALLOGRAPHY (3.4 ANGSTROMS) OF 1-167 IN COMPLEX WITH RAP1B</scope>
    <scope>SUBUNIT</scope>
</reference>
<reference key="16">
    <citation type="journal article" date="2006" name="Science">
        <title>The consensus coding sequences of human breast and colorectal cancers.</title>
        <authorList>
            <person name="Sjoeblom T."/>
            <person name="Jones S."/>
            <person name="Wood L.D."/>
            <person name="Parsons D.W."/>
            <person name="Lin J."/>
            <person name="Barber T.D."/>
            <person name="Mandelker D."/>
            <person name="Leary R.J."/>
            <person name="Ptak J."/>
            <person name="Silliman N."/>
            <person name="Szabo S."/>
            <person name="Buckhaults P."/>
            <person name="Farrell C."/>
            <person name="Meeh P."/>
            <person name="Markowitz S.D."/>
            <person name="Willis J."/>
            <person name="Dawson D."/>
            <person name="Willson J.K.V."/>
            <person name="Gazdar A.F."/>
            <person name="Hartigan J."/>
            <person name="Wu L."/>
            <person name="Liu C."/>
            <person name="Parmigiani G."/>
            <person name="Park B.H."/>
            <person name="Bachman K.E."/>
            <person name="Papadopoulos N."/>
            <person name="Vogelstein B."/>
            <person name="Kinzler K.W."/>
            <person name="Velculescu V.E."/>
        </authorList>
    </citation>
    <scope>VARIANTS [LARGE SCALE ANALYSIS] ARG-257 AND CYS-609</scope>
</reference>
<gene>
    <name type="primary">RAP1GAP</name>
    <name type="synonym">KIAA0474</name>
    <name type="synonym">RAP1GA1</name>
</gene>
<proteinExistence type="evidence at protein level"/>
<evidence type="ECO:0000250" key="1">
    <source>
        <dbReference type="UniProtKB" id="A2ALS5"/>
    </source>
</evidence>
<evidence type="ECO:0000255" key="2">
    <source>
        <dbReference type="PROSITE-ProRule" id="PRU00097"/>
    </source>
</evidence>
<evidence type="ECO:0000255" key="3">
    <source>
        <dbReference type="PROSITE-ProRule" id="PRU00165"/>
    </source>
</evidence>
<evidence type="ECO:0000256" key="4">
    <source>
        <dbReference type="SAM" id="MobiDB-lite"/>
    </source>
</evidence>
<evidence type="ECO:0000269" key="5">
    <source>
    </source>
</evidence>
<evidence type="ECO:0000269" key="6">
    <source>
    </source>
</evidence>
<evidence type="ECO:0000269" key="7">
    <source>
    </source>
</evidence>
<evidence type="ECO:0000269" key="8">
    <source>
    </source>
</evidence>
<evidence type="ECO:0000269" key="9">
    <source>
    </source>
</evidence>
<evidence type="ECO:0000303" key="10">
    <source>
    </source>
</evidence>
<evidence type="ECO:0000303" key="11">
    <source>
    </source>
</evidence>
<evidence type="ECO:0000305" key="12"/>
<evidence type="ECO:0007744" key="13">
    <source>
    </source>
</evidence>
<evidence type="ECO:0007744" key="14">
    <source>
    </source>
</evidence>
<evidence type="ECO:0007744" key="15">
    <source>
    </source>
</evidence>
<evidence type="ECO:0007744" key="16">
    <source>
    </source>
</evidence>
<evidence type="ECO:0007829" key="17">
    <source>
        <dbReference type="PDB" id="1SRQ"/>
    </source>
</evidence>
<evidence type="ECO:0007829" key="18">
    <source>
        <dbReference type="PDB" id="3BRW"/>
    </source>
</evidence>
<protein>
    <recommendedName>
        <fullName>Rap1 GTPase-activating protein 1</fullName>
        <shortName>Rap1GAP</shortName>
        <shortName>Rap1GAP1</shortName>
    </recommendedName>
</protein>
<accession>P47736</accession>
<accession>J3QSS6</accession>
<accession>O75062</accession>
<accession>Q5T3S9</accession>
<accession>Q5T3T4</accession>
<accession>Q7Z5S8</accession>
<accession>Q9UQ51</accession>